<keyword id="KW-0067">ATP-binding</keyword>
<keyword id="KW-0963">Cytoplasm</keyword>
<keyword id="KW-0324">Glycolysis</keyword>
<keyword id="KW-0418">Kinase</keyword>
<keyword id="KW-0547">Nucleotide-binding</keyword>
<keyword id="KW-0808">Transferase</keyword>
<name>PGK_VIBC3</name>
<sequence length="387" mass="40979">MSVIKMIDLDLAGKRVFIRADLNVPVKDGKVTSDARILASLPTIKHCLEAGAKVMVTSHLGRPTEGEYAEEFSLLPVVNYLNDALDCEVRLVKDYLDGVELNAGELVVLENVRFNKGEKKNEEALSKKYAALCDVFVMDAFGTAHRAQASTHGVGMFAPIACAGPLLADELEALGKAMDKPARPMVAIVGGSKVSTKLTVLESLSKIADQLVVGGGIANTFIAAAGHNVGKSLYEADLVETAKKLMEECAIPVATDVACAKAFDENAEAEIKHVSEVQDDDMIFDLGPNSTAELAEILKNAKTILWNGPVGVFEFKNFEAGTRGIAEAIAQSEGFSVAGGGDTLAAIDKFGIKADVSYISTGGGAFLEFVEGKKLPAVEMLEARAKA</sequence>
<feature type="chain" id="PRO_0000324783" description="Phosphoglycerate kinase">
    <location>
        <begin position="1"/>
        <end position="387"/>
    </location>
</feature>
<feature type="binding site" evidence="1">
    <location>
        <begin position="21"/>
        <end position="23"/>
    </location>
    <ligand>
        <name>substrate</name>
    </ligand>
</feature>
<feature type="binding site" evidence="1">
    <location>
        <position position="36"/>
    </location>
    <ligand>
        <name>substrate</name>
    </ligand>
</feature>
<feature type="binding site" evidence="1">
    <location>
        <begin position="59"/>
        <end position="62"/>
    </location>
    <ligand>
        <name>substrate</name>
    </ligand>
</feature>
<feature type="binding site" evidence="1">
    <location>
        <position position="113"/>
    </location>
    <ligand>
        <name>substrate</name>
    </ligand>
</feature>
<feature type="binding site" evidence="1">
    <location>
        <position position="146"/>
    </location>
    <ligand>
        <name>substrate</name>
    </ligand>
</feature>
<feature type="binding site" evidence="1">
    <location>
        <position position="197"/>
    </location>
    <ligand>
        <name>ATP</name>
        <dbReference type="ChEBI" id="CHEBI:30616"/>
    </ligand>
</feature>
<feature type="binding site" evidence="1">
    <location>
        <position position="314"/>
    </location>
    <ligand>
        <name>ATP</name>
        <dbReference type="ChEBI" id="CHEBI:30616"/>
    </ligand>
</feature>
<feature type="binding site" evidence="1">
    <location>
        <begin position="340"/>
        <end position="343"/>
    </location>
    <ligand>
        <name>ATP</name>
        <dbReference type="ChEBI" id="CHEBI:30616"/>
    </ligand>
</feature>
<dbReference type="EC" id="2.7.2.3"/>
<dbReference type="EMBL" id="CP000627">
    <property type="protein sequence ID" value="ABQ19963.1"/>
    <property type="status" value="ALT_INIT"/>
    <property type="molecule type" value="Genomic_DNA"/>
</dbReference>
<dbReference type="EMBL" id="CP001235">
    <property type="protein sequence ID" value="ACP08540.1"/>
    <property type="status" value="ALT_INIT"/>
    <property type="molecule type" value="Genomic_DNA"/>
</dbReference>
<dbReference type="EMBL" id="U72152">
    <property type="protein sequence ID" value="AAC44768.1"/>
    <property type="molecule type" value="Genomic_DNA"/>
</dbReference>
<dbReference type="RefSeq" id="WP_000111267.1">
    <property type="nucleotide sequence ID" value="NZ_JAACZH010000029.1"/>
</dbReference>
<dbReference type="SMR" id="A5F9G2"/>
<dbReference type="KEGG" id="vco:VC0395_A0030"/>
<dbReference type="KEGG" id="vcr:VC395_0521"/>
<dbReference type="PATRIC" id="fig|345073.21.peg.509"/>
<dbReference type="eggNOG" id="COG0126">
    <property type="taxonomic scope" value="Bacteria"/>
</dbReference>
<dbReference type="HOGENOM" id="CLU_025427_0_2_6"/>
<dbReference type="OrthoDB" id="9808460at2"/>
<dbReference type="UniPathway" id="UPA00109">
    <property type="reaction ID" value="UER00185"/>
</dbReference>
<dbReference type="Proteomes" id="UP000000249">
    <property type="component" value="Chromosome 2"/>
</dbReference>
<dbReference type="GO" id="GO:0005829">
    <property type="term" value="C:cytosol"/>
    <property type="evidence" value="ECO:0007669"/>
    <property type="project" value="TreeGrafter"/>
</dbReference>
<dbReference type="GO" id="GO:0043531">
    <property type="term" value="F:ADP binding"/>
    <property type="evidence" value="ECO:0007669"/>
    <property type="project" value="TreeGrafter"/>
</dbReference>
<dbReference type="GO" id="GO:0005524">
    <property type="term" value="F:ATP binding"/>
    <property type="evidence" value="ECO:0007669"/>
    <property type="project" value="UniProtKB-KW"/>
</dbReference>
<dbReference type="GO" id="GO:0004618">
    <property type="term" value="F:phosphoglycerate kinase activity"/>
    <property type="evidence" value="ECO:0007669"/>
    <property type="project" value="UniProtKB-UniRule"/>
</dbReference>
<dbReference type="GO" id="GO:0006094">
    <property type="term" value="P:gluconeogenesis"/>
    <property type="evidence" value="ECO:0007669"/>
    <property type="project" value="TreeGrafter"/>
</dbReference>
<dbReference type="GO" id="GO:0006096">
    <property type="term" value="P:glycolytic process"/>
    <property type="evidence" value="ECO:0007669"/>
    <property type="project" value="UniProtKB-UniRule"/>
</dbReference>
<dbReference type="FunFam" id="3.40.50.1260:FF:000001">
    <property type="entry name" value="Phosphoglycerate kinase"/>
    <property type="match status" value="1"/>
</dbReference>
<dbReference type="FunFam" id="3.40.50.1260:FF:000002">
    <property type="entry name" value="Phosphoglycerate kinase"/>
    <property type="match status" value="1"/>
</dbReference>
<dbReference type="Gene3D" id="3.40.50.1260">
    <property type="entry name" value="Phosphoglycerate kinase, N-terminal domain"/>
    <property type="match status" value="2"/>
</dbReference>
<dbReference type="HAMAP" id="MF_00145">
    <property type="entry name" value="Phosphoglyc_kinase"/>
    <property type="match status" value="1"/>
</dbReference>
<dbReference type="InterPro" id="IPR001576">
    <property type="entry name" value="Phosphoglycerate_kinase"/>
</dbReference>
<dbReference type="InterPro" id="IPR015911">
    <property type="entry name" value="Phosphoglycerate_kinase_CS"/>
</dbReference>
<dbReference type="InterPro" id="IPR015824">
    <property type="entry name" value="Phosphoglycerate_kinase_N"/>
</dbReference>
<dbReference type="InterPro" id="IPR036043">
    <property type="entry name" value="Phosphoglycerate_kinase_sf"/>
</dbReference>
<dbReference type="PANTHER" id="PTHR11406">
    <property type="entry name" value="PHOSPHOGLYCERATE KINASE"/>
    <property type="match status" value="1"/>
</dbReference>
<dbReference type="PANTHER" id="PTHR11406:SF23">
    <property type="entry name" value="PHOSPHOGLYCERATE KINASE 1, CHLOROPLASTIC-RELATED"/>
    <property type="match status" value="1"/>
</dbReference>
<dbReference type="Pfam" id="PF00162">
    <property type="entry name" value="PGK"/>
    <property type="match status" value="1"/>
</dbReference>
<dbReference type="PIRSF" id="PIRSF000724">
    <property type="entry name" value="Pgk"/>
    <property type="match status" value="1"/>
</dbReference>
<dbReference type="PRINTS" id="PR00477">
    <property type="entry name" value="PHGLYCKINASE"/>
</dbReference>
<dbReference type="SUPFAM" id="SSF53748">
    <property type="entry name" value="Phosphoglycerate kinase"/>
    <property type="match status" value="1"/>
</dbReference>
<dbReference type="PROSITE" id="PS00111">
    <property type="entry name" value="PGLYCERATE_KINASE"/>
    <property type="match status" value="1"/>
</dbReference>
<organism>
    <name type="scientific">Vibrio cholerae serotype O1 (strain ATCC 39541 / Classical Ogawa 395 / O395)</name>
    <dbReference type="NCBI Taxonomy" id="345073"/>
    <lineage>
        <taxon>Bacteria</taxon>
        <taxon>Pseudomonadati</taxon>
        <taxon>Pseudomonadota</taxon>
        <taxon>Gammaproteobacteria</taxon>
        <taxon>Vibrionales</taxon>
        <taxon>Vibrionaceae</taxon>
        <taxon>Vibrio</taxon>
    </lineage>
</organism>
<gene>
    <name type="primary">pgk</name>
    <name type="ordered locus">VC0395_A0030</name>
    <name type="ordered locus">VC395_0521</name>
</gene>
<comment type="catalytic activity">
    <reaction>
        <text>(2R)-3-phosphoglycerate + ATP = (2R)-3-phospho-glyceroyl phosphate + ADP</text>
        <dbReference type="Rhea" id="RHEA:14801"/>
        <dbReference type="ChEBI" id="CHEBI:30616"/>
        <dbReference type="ChEBI" id="CHEBI:57604"/>
        <dbReference type="ChEBI" id="CHEBI:58272"/>
        <dbReference type="ChEBI" id="CHEBI:456216"/>
        <dbReference type="EC" id="2.7.2.3"/>
    </reaction>
</comment>
<comment type="pathway">
    <text>Carbohydrate degradation; glycolysis; pyruvate from D-glyceraldehyde 3-phosphate: step 2/5.</text>
</comment>
<comment type="subunit">
    <text evidence="1">Monomer.</text>
</comment>
<comment type="subcellular location">
    <subcellularLocation>
        <location>Cytoplasm</location>
    </subcellularLocation>
</comment>
<comment type="similarity">
    <text evidence="2">Belongs to the phosphoglycerate kinase family.</text>
</comment>
<comment type="sequence caution" evidence="2">
    <conflict type="erroneous initiation">
        <sequence resource="EMBL-CDS" id="ABQ19963"/>
    </conflict>
</comment>
<comment type="sequence caution" evidence="2">
    <conflict type="erroneous initiation">
        <sequence resource="EMBL-CDS" id="ACP08540"/>
    </conflict>
</comment>
<protein>
    <recommendedName>
        <fullName>Phosphoglycerate kinase</fullName>
        <ecNumber>2.7.2.3</ecNumber>
    </recommendedName>
</protein>
<evidence type="ECO:0000250" key="1"/>
<evidence type="ECO:0000305" key="2"/>
<accession>A5F9G2</accession>
<accession>C3LX30</accession>
<accession>P96154</accession>
<accession>Q9KUN8</accession>
<proteinExistence type="inferred from homology"/>
<reference key="1">
    <citation type="submission" date="2007-03" db="EMBL/GenBank/DDBJ databases">
        <authorList>
            <person name="Heidelberg J."/>
        </authorList>
    </citation>
    <scope>NUCLEOTIDE SEQUENCE [LARGE SCALE GENOMIC DNA]</scope>
    <source>
        <strain>ATCC 39541 / Classical Ogawa 395 / O395</strain>
    </source>
</reference>
<reference key="2">
    <citation type="journal article" date="2008" name="PLoS ONE">
        <title>A recalibrated molecular clock and independent origins for the cholera pandemic clones.</title>
        <authorList>
            <person name="Feng L."/>
            <person name="Reeves P.R."/>
            <person name="Lan R."/>
            <person name="Ren Y."/>
            <person name="Gao C."/>
            <person name="Zhou Z."/>
            <person name="Ren Y."/>
            <person name="Cheng J."/>
            <person name="Wang W."/>
            <person name="Wang J."/>
            <person name="Qian W."/>
            <person name="Li D."/>
            <person name="Wang L."/>
        </authorList>
    </citation>
    <scope>NUCLEOTIDE SEQUENCE [LARGE SCALE GENOMIC DNA]</scope>
    <source>
        <strain>ATCC 39541 / Classical Ogawa 395 / O395</strain>
    </source>
</reference>
<reference key="3">
    <citation type="journal article" date="1997" name="J. Bacteriol.">
        <title>Identification, sequencing, and enzymatic activity of the erythrose-4-phosphate dehydrogenase gene of Vibrio cholerae.</title>
        <authorList>
            <person name="Carroll P.A."/>
            <person name="Zhao G."/>
            <person name="Boyko S.A."/>
            <person name="Winkler M.E."/>
            <person name="Calderwood S.B."/>
        </authorList>
    </citation>
    <scope>NUCLEOTIDE SEQUENCE [GENOMIC DNA] OF 1-16</scope>
</reference>